<proteinExistence type="inferred from homology"/>
<feature type="chain" id="PRO_1000205536" description="GTPase Era">
    <location>
        <begin position="1"/>
        <end position="300"/>
    </location>
</feature>
<feature type="domain" description="Era-type G" evidence="2">
    <location>
        <begin position="8"/>
        <end position="176"/>
    </location>
</feature>
<feature type="domain" description="KH type-2" evidence="1">
    <location>
        <begin position="199"/>
        <end position="283"/>
    </location>
</feature>
<feature type="region of interest" description="G1" evidence="2">
    <location>
        <begin position="16"/>
        <end position="23"/>
    </location>
</feature>
<feature type="region of interest" description="G2" evidence="2">
    <location>
        <begin position="42"/>
        <end position="46"/>
    </location>
</feature>
<feature type="region of interest" description="G3" evidence="2">
    <location>
        <begin position="63"/>
        <end position="66"/>
    </location>
</feature>
<feature type="region of interest" description="G4" evidence="2">
    <location>
        <begin position="125"/>
        <end position="128"/>
    </location>
</feature>
<feature type="region of interest" description="G5" evidence="2">
    <location>
        <begin position="155"/>
        <end position="157"/>
    </location>
</feature>
<feature type="binding site" evidence="1">
    <location>
        <begin position="16"/>
        <end position="23"/>
    </location>
    <ligand>
        <name>GTP</name>
        <dbReference type="ChEBI" id="CHEBI:37565"/>
    </ligand>
</feature>
<feature type="binding site" evidence="1">
    <location>
        <begin position="63"/>
        <end position="67"/>
    </location>
    <ligand>
        <name>GTP</name>
        <dbReference type="ChEBI" id="CHEBI:37565"/>
    </ligand>
</feature>
<feature type="binding site" evidence="1">
    <location>
        <begin position="125"/>
        <end position="128"/>
    </location>
    <ligand>
        <name>GTP</name>
        <dbReference type="ChEBI" id="CHEBI:37565"/>
    </ligand>
</feature>
<gene>
    <name evidence="1" type="primary">era</name>
    <name type="ordered locus">Avin_13790</name>
</gene>
<evidence type="ECO:0000255" key="1">
    <source>
        <dbReference type="HAMAP-Rule" id="MF_00367"/>
    </source>
</evidence>
<evidence type="ECO:0000255" key="2">
    <source>
        <dbReference type="PROSITE-ProRule" id="PRU01050"/>
    </source>
</evidence>
<sequence length="300" mass="34070">MTEENSLRCGYVAIVGRPNVGKSTLLNHILGQKLAITSRKPQTTRHNMLGIKTEGDVQAIYVDTPGLHKQNDKALNRYMNKTASAALKDVDVVIFVVDRMRWTEEDQLVLDRLQYVQGPVLVAVNKADRLEDKVELLPHLQWLAQQLPNAEIVPISALHGHNLDTLERLVAGRLPQGEHFFPEDQITDRSSRFLAAELVREKIMRQLGAELPYQVTVEIEDFKQQGQVLHIHALILVEREGQKKIIIGEKGERIKRIGQEARQGMEVLFDSKVMLNLWVKVKGGWSDDERALHSLGYRDS</sequence>
<name>ERA_AZOVD</name>
<comment type="function">
    <text evidence="1">An essential GTPase that binds both GDP and GTP, with rapid nucleotide exchange. Plays a role in 16S rRNA processing and 30S ribosomal subunit biogenesis and possibly also in cell cycle regulation and energy metabolism.</text>
</comment>
<comment type="subunit">
    <text evidence="1">Monomer.</text>
</comment>
<comment type="subcellular location">
    <subcellularLocation>
        <location>Cytoplasm</location>
    </subcellularLocation>
    <subcellularLocation>
        <location evidence="1">Cell inner membrane</location>
        <topology evidence="1">Peripheral membrane protein</topology>
    </subcellularLocation>
</comment>
<comment type="similarity">
    <text evidence="1 2">Belongs to the TRAFAC class TrmE-Era-EngA-EngB-Septin-like GTPase superfamily. Era GTPase family.</text>
</comment>
<protein>
    <recommendedName>
        <fullName evidence="1">GTPase Era</fullName>
    </recommendedName>
</protein>
<accession>C1DQS3</accession>
<reference key="1">
    <citation type="journal article" date="2009" name="J. Bacteriol.">
        <title>Genome sequence of Azotobacter vinelandii, an obligate aerobe specialized to support diverse anaerobic metabolic processes.</title>
        <authorList>
            <person name="Setubal J.C."/>
            <person name="Dos Santos P."/>
            <person name="Goldman B.S."/>
            <person name="Ertesvaag H."/>
            <person name="Espin G."/>
            <person name="Rubio L.M."/>
            <person name="Valla S."/>
            <person name="Almeida N.F."/>
            <person name="Balasubramanian D."/>
            <person name="Cromes L."/>
            <person name="Curatti L."/>
            <person name="Du Z."/>
            <person name="Godsy E."/>
            <person name="Goodner B."/>
            <person name="Hellner-Burris K."/>
            <person name="Hernandez J.A."/>
            <person name="Houmiel K."/>
            <person name="Imperial J."/>
            <person name="Kennedy C."/>
            <person name="Larson T.J."/>
            <person name="Latreille P."/>
            <person name="Ligon L.S."/>
            <person name="Lu J."/>
            <person name="Maerk M."/>
            <person name="Miller N.M."/>
            <person name="Norton S."/>
            <person name="O'Carroll I.P."/>
            <person name="Paulsen I."/>
            <person name="Raulfs E.C."/>
            <person name="Roemer R."/>
            <person name="Rosser J."/>
            <person name="Segura D."/>
            <person name="Slater S."/>
            <person name="Stricklin S.L."/>
            <person name="Studholme D.J."/>
            <person name="Sun J."/>
            <person name="Viana C.J."/>
            <person name="Wallin E."/>
            <person name="Wang B."/>
            <person name="Wheeler C."/>
            <person name="Zhu H."/>
            <person name="Dean D.R."/>
            <person name="Dixon R."/>
            <person name="Wood D."/>
        </authorList>
    </citation>
    <scope>NUCLEOTIDE SEQUENCE [LARGE SCALE GENOMIC DNA]</scope>
    <source>
        <strain>DJ / ATCC BAA-1303</strain>
    </source>
</reference>
<dbReference type="EMBL" id="CP001157">
    <property type="protein sequence ID" value="ACO77596.1"/>
    <property type="molecule type" value="Genomic_DNA"/>
</dbReference>
<dbReference type="RefSeq" id="WP_012700015.1">
    <property type="nucleotide sequence ID" value="NC_012560.1"/>
</dbReference>
<dbReference type="SMR" id="C1DQS3"/>
<dbReference type="STRING" id="322710.Avin_13790"/>
<dbReference type="EnsemblBacteria" id="ACO77596">
    <property type="protein sequence ID" value="ACO77596"/>
    <property type="gene ID" value="Avin_13790"/>
</dbReference>
<dbReference type="GeneID" id="88184682"/>
<dbReference type="KEGG" id="avn:Avin_13790"/>
<dbReference type="eggNOG" id="COG1159">
    <property type="taxonomic scope" value="Bacteria"/>
</dbReference>
<dbReference type="HOGENOM" id="CLU_038009_1_2_6"/>
<dbReference type="OrthoDB" id="9805918at2"/>
<dbReference type="Proteomes" id="UP000002424">
    <property type="component" value="Chromosome"/>
</dbReference>
<dbReference type="GO" id="GO:0005829">
    <property type="term" value="C:cytosol"/>
    <property type="evidence" value="ECO:0007669"/>
    <property type="project" value="TreeGrafter"/>
</dbReference>
<dbReference type="GO" id="GO:0005886">
    <property type="term" value="C:plasma membrane"/>
    <property type="evidence" value="ECO:0007669"/>
    <property type="project" value="UniProtKB-SubCell"/>
</dbReference>
<dbReference type="GO" id="GO:0005525">
    <property type="term" value="F:GTP binding"/>
    <property type="evidence" value="ECO:0007669"/>
    <property type="project" value="UniProtKB-UniRule"/>
</dbReference>
<dbReference type="GO" id="GO:0003924">
    <property type="term" value="F:GTPase activity"/>
    <property type="evidence" value="ECO:0007669"/>
    <property type="project" value="UniProtKB-UniRule"/>
</dbReference>
<dbReference type="GO" id="GO:0043024">
    <property type="term" value="F:ribosomal small subunit binding"/>
    <property type="evidence" value="ECO:0007669"/>
    <property type="project" value="TreeGrafter"/>
</dbReference>
<dbReference type="GO" id="GO:0070181">
    <property type="term" value="F:small ribosomal subunit rRNA binding"/>
    <property type="evidence" value="ECO:0007669"/>
    <property type="project" value="UniProtKB-UniRule"/>
</dbReference>
<dbReference type="GO" id="GO:0000028">
    <property type="term" value="P:ribosomal small subunit assembly"/>
    <property type="evidence" value="ECO:0007669"/>
    <property type="project" value="TreeGrafter"/>
</dbReference>
<dbReference type="CDD" id="cd04163">
    <property type="entry name" value="Era"/>
    <property type="match status" value="1"/>
</dbReference>
<dbReference type="CDD" id="cd22534">
    <property type="entry name" value="KH-II_Era"/>
    <property type="match status" value="1"/>
</dbReference>
<dbReference type="FunFam" id="3.30.300.20:FF:000003">
    <property type="entry name" value="GTPase Era"/>
    <property type="match status" value="1"/>
</dbReference>
<dbReference type="FunFam" id="3.40.50.300:FF:000094">
    <property type="entry name" value="GTPase Era"/>
    <property type="match status" value="1"/>
</dbReference>
<dbReference type="Gene3D" id="3.30.300.20">
    <property type="match status" value="1"/>
</dbReference>
<dbReference type="Gene3D" id="3.40.50.300">
    <property type="entry name" value="P-loop containing nucleotide triphosphate hydrolases"/>
    <property type="match status" value="1"/>
</dbReference>
<dbReference type="HAMAP" id="MF_00367">
    <property type="entry name" value="GTPase_Era"/>
    <property type="match status" value="1"/>
</dbReference>
<dbReference type="InterPro" id="IPR030388">
    <property type="entry name" value="G_ERA_dom"/>
</dbReference>
<dbReference type="InterPro" id="IPR006073">
    <property type="entry name" value="GTP-bd"/>
</dbReference>
<dbReference type="InterPro" id="IPR005662">
    <property type="entry name" value="GTPase_Era-like"/>
</dbReference>
<dbReference type="InterPro" id="IPR015946">
    <property type="entry name" value="KH_dom-like_a/b"/>
</dbReference>
<dbReference type="InterPro" id="IPR004044">
    <property type="entry name" value="KH_dom_type_2"/>
</dbReference>
<dbReference type="InterPro" id="IPR009019">
    <property type="entry name" value="KH_sf_prok-type"/>
</dbReference>
<dbReference type="InterPro" id="IPR027417">
    <property type="entry name" value="P-loop_NTPase"/>
</dbReference>
<dbReference type="InterPro" id="IPR005225">
    <property type="entry name" value="Small_GTP-bd"/>
</dbReference>
<dbReference type="NCBIfam" id="TIGR00436">
    <property type="entry name" value="era"/>
    <property type="match status" value="1"/>
</dbReference>
<dbReference type="NCBIfam" id="NF000908">
    <property type="entry name" value="PRK00089.1"/>
    <property type="match status" value="1"/>
</dbReference>
<dbReference type="NCBIfam" id="TIGR00231">
    <property type="entry name" value="small_GTP"/>
    <property type="match status" value="1"/>
</dbReference>
<dbReference type="PANTHER" id="PTHR42698">
    <property type="entry name" value="GTPASE ERA"/>
    <property type="match status" value="1"/>
</dbReference>
<dbReference type="PANTHER" id="PTHR42698:SF1">
    <property type="entry name" value="GTPASE ERA, MITOCHONDRIAL"/>
    <property type="match status" value="1"/>
</dbReference>
<dbReference type="Pfam" id="PF07650">
    <property type="entry name" value="KH_2"/>
    <property type="match status" value="1"/>
</dbReference>
<dbReference type="Pfam" id="PF01926">
    <property type="entry name" value="MMR_HSR1"/>
    <property type="match status" value="1"/>
</dbReference>
<dbReference type="PRINTS" id="PR00326">
    <property type="entry name" value="GTP1OBG"/>
</dbReference>
<dbReference type="SUPFAM" id="SSF52540">
    <property type="entry name" value="P-loop containing nucleoside triphosphate hydrolases"/>
    <property type="match status" value="1"/>
</dbReference>
<dbReference type="SUPFAM" id="SSF54814">
    <property type="entry name" value="Prokaryotic type KH domain (KH-domain type II)"/>
    <property type="match status" value="1"/>
</dbReference>
<dbReference type="PROSITE" id="PS51713">
    <property type="entry name" value="G_ERA"/>
    <property type="match status" value="1"/>
</dbReference>
<dbReference type="PROSITE" id="PS50823">
    <property type="entry name" value="KH_TYPE_2"/>
    <property type="match status" value="1"/>
</dbReference>
<keyword id="KW-0997">Cell inner membrane</keyword>
<keyword id="KW-1003">Cell membrane</keyword>
<keyword id="KW-0963">Cytoplasm</keyword>
<keyword id="KW-0342">GTP-binding</keyword>
<keyword id="KW-0472">Membrane</keyword>
<keyword id="KW-0547">Nucleotide-binding</keyword>
<keyword id="KW-0690">Ribosome biogenesis</keyword>
<keyword id="KW-0694">RNA-binding</keyword>
<keyword id="KW-0699">rRNA-binding</keyword>
<organism>
    <name type="scientific">Azotobacter vinelandii (strain DJ / ATCC BAA-1303)</name>
    <dbReference type="NCBI Taxonomy" id="322710"/>
    <lineage>
        <taxon>Bacteria</taxon>
        <taxon>Pseudomonadati</taxon>
        <taxon>Pseudomonadota</taxon>
        <taxon>Gammaproteobacteria</taxon>
        <taxon>Pseudomonadales</taxon>
        <taxon>Pseudomonadaceae</taxon>
        <taxon>Azotobacter</taxon>
    </lineage>
</organism>